<reference key="1">
    <citation type="journal article" date="2010" name="PLoS ONE">
        <title>The complete genome sequence of Cupriavidus metallidurans strain CH34, a master survivalist in harsh and anthropogenic environments.</title>
        <authorList>
            <person name="Janssen P.J."/>
            <person name="Van Houdt R."/>
            <person name="Moors H."/>
            <person name="Monsieurs P."/>
            <person name="Morin N."/>
            <person name="Michaux A."/>
            <person name="Benotmane M.A."/>
            <person name="Leys N."/>
            <person name="Vallaeys T."/>
            <person name="Lapidus A."/>
            <person name="Monchy S."/>
            <person name="Medigue C."/>
            <person name="Taghavi S."/>
            <person name="McCorkle S."/>
            <person name="Dunn J."/>
            <person name="van der Lelie D."/>
            <person name="Mergeay M."/>
        </authorList>
    </citation>
    <scope>NUCLEOTIDE SEQUENCE [LARGE SCALE GENOMIC DNA]</scope>
    <source>
        <strain>ATCC 43123 / DSM 2839 / NBRC 102507 / CH34</strain>
    </source>
</reference>
<comment type="function">
    <text evidence="1">Involved in unsaturated fatty acids biosynthesis. Catalyzes the dehydration of short chain beta-hydroxyacyl-ACPs and long chain saturated and unsaturated beta-hydroxyacyl-ACPs.</text>
</comment>
<comment type="catalytic activity">
    <reaction evidence="1">
        <text>a (3R)-hydroxyacyl-[ACP] = a (2E)-enoyl-[ACP] + H2O</text>
        <dbReference type="Rhea" id="RHEA:13097"/>
        <dbReference type="Rhea" id="RHEA-COMP:9925"/>
        <dbReference type="Rhea" id="RHEA-COMP:9945"/>
        <dbReference type="ChEBI" id="CHEBI:15377"/>
        <dbReference type="ChEBI" id="CHEBI:78784"/>
        <dbReference type="ChEBI" id="CHEBI:78827"/>
        <dbReference type="EC" id="4.2.1.59"/>
    </reaction>
</comment>
<comment type="subcellular location">
    <subcellularLocation>
        <location evidence="1">Cytoplasm</location>
    </subcellularLocation>
</comment>
<comment type="similarity">
    <text evidence="1">Belongs to the thioester dehydratase family. FabZ subfamily.</text>
</comment>
<protein>
    <recommendedName>
        <fullName evidence="1">3-hydroxyacyl-[acyl-carrier-protein] dehydratase FabZ</fullName>
        <ecNumber evidence="1">4.2.1.59</ecNumber>
    </recommendedName>
    <alternativeName>
        <fullName evidence="1">(3R)-hydroxymyristoyl-[acyl-carrier-protein] dehydratase</fullName>
        <shortName evidence="1">(3R)-hydroxymyristoyl-ACP dehydrase</shortName>
    </alternativeName>
    <alternativeName>
        <fullName evidence="1">Beta-hydroxyacyl-ACP dehydratase</fullName>
    </alternativeName>
</protein>
<organism>
    <name type="scientific">Cupriavidus metallidurans (strain ATCC 43123 / DSM 2839 / NBRC 102507 / CH34)</name>
    <name type="common">Ralstonia metallidurans</name>
    <dbReference type="NCBI Taxonomy" id="266264"/>
    <lineage>
        <taxon>Bacteria</taxon>
        <taxon>Pseudomonadati</taxon>
        <taxon>Pseudomonadota</taxon>
        <taxon>Betaproteobacteria</taxon>
        <taxon>Burkholderiales</taxon>
        <taxon>Burkholderiaceae</taxon>
        <taxon>Cupriavidus</taxon>
    </lineage>
</organism>
<feature type="chain" id="PRO_0000301917" description="3-hydroxyacyl-[acyl-carrier-protein] dehydratase FabZ">
    <location>
        <begin position="1"/>
        <end position="150"/>
    </location>
</feature>
<feature type="active site" evidence="1">
    <location>
        <position position="52"/>
    </location>
</feature>
<accession>Q1LNE7</accession>
<sequence length="150" mass="16988">MTASEIDIRKILKLLPHRYPILLVDRVLEFEPQKRIKTLKNVTINEPYFMGHFPDQPVMPGVMILEALAQSAGLLTFGADMERKEGALYYFVGIDGARFKRVVYPGDQLHLNVTVERYIRGIWKFKASATVDGEVACEAELMCTVKQAEG</sequence>
<name>FABZ_CUPMC</name>
<gene>
    <name evidence="1" type="primary">fabZ</name>
    <name type="ordered locus">Rmet_1446</name>
</gene>
<dbReference type="EC" id="4.2.1.59" evidence="1"/>
<dbReference type="EMBL" id="CP000352">
    <property type="protein sequence ID" value="ABF08329.1"/>
    <property type="molecule type" value="Genomic_DNA"/>
</dbReference>
<dbReference type="RefSeq" id="WP_008652053.1">
    <property type="nucleotide sequence ID" value="NC_007973.1"/>
</dbReference>
<dbReference type="SMR" id="Q1LNE7"/>
<dbReference type="STRING" id="266264.Rmet_1446"/>
<dbReference type="GeneID" id="60822203"/>
<dbReference type="KEGG" id="rme:Rmet_1446"/>
<dbReference type="eggNOG" id="COG0764">
    <property type="taxonomic scope" value="Bacteria"/>
</dbReference>
<dbReference type="HOGENOM" id="CLU_078912_1_0_4"/>
<dbReference type="Proteomes" id="UP000002429">
    <property type="component" value="Chromosome"/>
</dbReference>
<dbReference type="GO" id="GO:0005737">
    <property type="term" value="C:cytoplasm"/>
    <property type="evidence" value="ECO:0007669"/>
    <property type="project" value="UniProtKB-SubCell"/>
</dbReference>
<dbReference type="GO" id="GO:0016020">
    <property type="term" value="C:membrane"/>
    <property type="evidence" value="ECO:0007669"/>
    <property type="project" value="GOC"/>
</dbReference>
<dbReference type="GO" id="GO:0019171">
    <property type="term" value="F:(3R)-hydroxyacyl-[acyl-carrier-protein] dehydratase activity"/>
    <property type="evidence" value="ECO:0007669"/>
    <property type="project" value="UniProtKB-EC"/>
</dbReference>
<dbReference type="GO" id="GO:0006633">
    <property type="term" value="P:fatty acid biosynthetic process"/>
    <property type="evidence" value="ECO:0007669"/>
    <property type="project" value="UniProtKB-UniRule"/>
</dbReference>
<dbReference type="GO" id="GO:0009245">
    <property type="term" value="P:lipid A biosynthetic process"/>
    <property type="evidence" value="ECO:0007669"/>
    <property type="project" value="UniProtKB-UniRule"/>
</dbReference>
<dbReference type="CDD" id="cd01288">
    <property type="entry name" value="FabZ"/>
    <property type="match status" value="1"/>
</dbReference>
<dbReference type="FunFam" id="3.10.129.10:FF:000001">
    <property type="entry name" value="3-hydroxyacyl-[acyl-carrier-protein] dehydratase FabZ"/>
    <property type="match status" value="1"/>
</dbReference>
<dbReference type="Gene3D" id="3.10.129.10">
    <property type="entry name" value="Hotdog Thioesterase"/>
    <property type="match status" value="1"/>
</dbReference>
<dbReference type="HAMAP" id="MF_00406">
    <property type="entry name" value="FabZ"/>
    <property type="match status" value="1"/>
</dbReference>
<dbReference type="InterPro" id="IPR013114">
    <property type="entry name" value="FabA_FabZ"/>
</dbReference>
<dbReference type="InterPro" id="IPR010084">
    <property type="entry name" value="FabZ"/>
</dbReference>
<dbReference type="InterPro" id="IPR029069">
    <property type="entry name" value="HotDog_dom_sf"/>
</dbReference>
<dbReference type="NCBIfam" id="TIGR01750">
    <property type="entry name" value="fabZ"/>
    <property type="match status" value="1"/>
</dbReference>
<dbReference type="NCBIfam" id="NF000582">
    <property type="entry name" value="PRK00006.1"/>
    <property type="match status" value="1"/>
</dbReference>
<dbReference type="PANTHER" id="PTHR30272">
    <property type="entry name" value="3-HYDROXYACYL-[ACYL-CARRIER-PROTEIN] DEHYDRATASE"/>
    <property type="match status" value="1"/>
</dbReference>
<dbReference type="PANTHER" id="PTHR30272:SF1">
    <property type="entry name" value="3-HYDROXYACYL-[ACYL-CARRIER-PROTEIN] DEHYDRATASE"/>
    <property type="match status" value="1"/>
</dbReference>
<dbReference type="Pfam" id="PF07977">
    <property type="entry name" value="FabA"/>
    <property type="match status" value="1"/>
</dbReference>
<dbReference type="SUPFAM" id="SSF54637">
    <property type="entry name" value="Thioesterase/thiol ester dehydrase-isomerase"/>
    <property type="match status" value="1"/>
</dbReference>
<keyword id="KW-0963">Cytoplasm</keyword>
<keyword id="KW-0441">Lipid A biosynthesis</keyword>
<keyword id="KW-0444">Lipid biosynthesis</keyword>
<keyword id="KW-0443">Lipid metabolism</keyword>
<keyword id="KW-0456">Lyase</keyword>
<keyword id="KW-1185">Reference proteome</keyword>
<evidence type="ECO:0000255" key="1">
    <source>
        <dbReference type="HAMAP-Rule" id="MF_00406"/>
    </source>
</evidence>
<proteinExistence type="inferred from homology"/>